<sequence>MAKGIPVLEIFGPTIQGEGMVIGQKTMFVRTAGCDYSCSWCDSAFTWDGSAKKDIRWMTAEEIFAELKDIGGDAFSHVTISGGNPALLKQLDAFIELLKENNIRAALETQGTVYQDWFTLIDDLTISPKPPSSKMVTNFQKLDHILTSLQENDRQHAVSLKVVIFNDEDLEFAKTVHKRYPGIPFYLQVGNDDVHTTDDQSLIAHLLGKYEALVDKVAVDAELNLVRVLPQLHTLLWGNKRGV</sequence>
<reference key="1">
    <citation type="journal article" date="1997" name="Nature">
        <title>The complete genome sequence of the Gram-positive bacterium Bacillus subtilis.</title>
        <authorList>
            <person name="Kunst F."/>
            <person name="Ogasawara N."/>
            <person name="Moszer I."/>
            <person name="Albertini A.M."/>
            <person name="Alloni G."/>
            <person name="Azevedo V."/>
            <person name="Bertero M.G."/>
            <person name="Bessieres P."/>
            <person name="Bolotin A."/>
            <person name="Borchert S."/>
            <person name="Borriss R."/>
            <person name="Boursier L."/>
            <person name="Brans A."/>
            <person name="Braun M."/>
            <person name="Brignell S.C."/>
            <person name="Bron S."/>
            <person name="Brouillet S."/>
            <person name="Bruschi C.V."/>
            <person name="Caldwell B."/>
            <person name="Capuano V."/>
            <person name="Carter N.M."/>
            <person name="Choi S.-K."/>
            <person name="Codani J.-J."/>
            <person name="Connerton I.F."/>
            <person name="Cummings N.J."/>
            <person name="Daniel R.A."/>
            <person name="Denizot F."/>
            <person name="Devine K.M."/>
            <person name="Duesterhoeft A."/>
            <person name="Ehrlich S.D."/>
            <person name="Emmerson P.T."/>
            <person name="Entian K.-D."/>
            <person name="Errington J."/>
            <person name="Fabret C."/>
            <person name="Ferrari E."/>
            <person name="Foulger D."/>
            <person name="Fritz C."/>
            <person name="Fujita M."/>
            <person name="Fujita Y."/>
            <person name="Fuma S."/>
            <person name="Galizzi A."/>
            <person name="Galleron N."/>
            <person name="Ghim S.-Y."/>
            <person name="Glaser P."/>
            <person name="Goffeau A."/>
            <person name="Golightly E.J."/>
            <person name="Grandi G."/>
            <person name="Guiseppi G."/>
            <person name="Guy B.J."/>
            <person name="Haga K."/>
            <person name="Haiech J."/>
            <person name="Harwood C.R."/>
            <person name="Henaut A."/>
            <person name="Hilbert H."/>
            <person name="Holsappel S."/>
            <person name="Hosono S."/>
            <person name="Hullo M.-F."/>
            <person name="Itaya M."/>
            <person name="Jones L.-M."/>
            <person name="Joris B."/>
            <person name="Karamata D."/>
            <person name="Kasahara Y."/>
            <person name="Klaerr-Blanchard M."/>
            <person name="Klein C."/>
            <person name="Kobayashi Y."/>
            <person name="Koetter P."/>
            <person name="Koningstein G."/>
            <person name="Krogh S."/>
            <person name="Kumano M."/>
            <person name="Kurita K."/>
            <person name="Lapidus A."/>
            <person name="Lardinois S."/>
            <person name="Lauber J."/>
            <person name="Lazarevic V."/>
            <person name="Lee S.-M."/>
            <person name="Levine A."/>
            <person name="Liu H."/>
            <person name="Masuda S."/>
            <person name="Mauel C."/>
            <person name="Medigue C."/>
            <person name="Medina N."/>
            <person name="Mellado R.P."/>
            <person name="Mizuno M."/>
            <person name="Moestl D."/>
            <person name="Nakai S."/>
            <person name="Noback M."/>
            <person name="Noone D."/>
            <person name="O'Reilly M."/>
            <person name="Ogawa K."/>
            <person name="Ogiwara A."/>
            <person name="Oudega B."/>
            <person name="Park S.-H."/>
            <person name="Parro V."/>
            <person name="Pohl T.M."/>
            <person name="Portetelle D."/>
            <person name="Porwollik S."/>
            <person name="Prescott A.M."/>
            <person name="Presecan E."/>
            <person name="Pujic P."/>
            <person name="Purnelle B."/>
            <person name="Rapoport G."/>
            <person name="Rey M."/>
            <person name="Reynolds S."/>
            <person name="Rieger M."/>
            <person name="Rivolta C."/>
            <person name="Rocha E."/>
            <person name="Roche B."/>
            <person name="Rose M."/>
            <person name="Sadaie Y."/>
            <person name="Sato T."/>
            <person name="Scanlan E."/>
            <person name="Schleich S."/>
            <person name="Schroeter R."/>
            <person name="Scoffone F."/>
            <person name="Sekiguchi J."/>
            <person name="Sekowska A."/>
            <person name="Seror S.J."/>
            <person name="Serror P."/>
            <person name="Shin B.-S."/>
            <person name="Soldo B."/>
            <person name="Sorokin A."/>
            <person name="Tacconi E."/>
            <person name="Takagi T."/>
            <person name="Takahashi H."/>
            <person name="Takemaru K."/>
            <person name="Takeuchi M."/>
            <person name="Tamakoshi A."/>
            <person name="Tanaka T."/>
            <person name="Terpstra P."/>
            <person name="Tognoni A."/>
            <person name="Tosato V."/>
            <person name="Uchiyama S."/>
            <person name="Vandenbol M."/>
            <person name="Vannier F."/>
            <person name="Vassarotti A."/>
            <person name="Viari A."/>
            <person name="Wambutt R."/>
            <person name="Wedler E."/>
            <person name="Wedler H."/>
            <person name="Weitzenegger T."/>
            <person name="Winters P."/>
            <person name="Wipat A."/>
            <person name="Yamamoto H."/>
            <person name="Yamane K."/>
            <person name="Yasumoto K."/>
            <person name="Yata K."/>
            <person name="Yoshida K."/>
            <person name="Yoshikawa H.-F."/>
            <person name="Zumstein E."/>
            <person name="Yoshikawa H."/>
            <person name="Danchin A."/>
        </authorList>
    </citation>
    <scope>NUCLEOTIDE SEQUENCE [LARGE SCALE GENOMIC DNA]</scope>
    <source>
        <strain>168</strain>
    </source>
</reference>
<reference key="2">
    <citation type="journal article" date="2004" name="J. Biol. Chem.">
        <title>Identification of four genes necessary for biosynthesis of the modified nucleoside queuosine.</title>
        <authorList>
            <person name="Reader J.S."/>
            <person name="Metzgar D."/>
            <person name="Schimmel P."/>
            <person name="de Crecy-Lagard V."/>
        </authorList>
    </citation>
    <scope>FUNCTION IN QUEUOSINE BIOSYNTHESIS</scope>
    <scope>GENE NAME</scope>
</reference>
<reference key="3">
    <citation type="journal article" date="2009" name="Biochemistry">
        <title>The deazapurine biosynthetic pathway revealed: in vitro enzymatic synthesis of PreQ(0) from guanosine 5'-triphosphate in four steps.</title>
        <authorList>
            <person name="McCarty R.M."/>
            <person name="Somogyi A."/>
            <person name="Lin G."/>
            <person name="Jacobsen N.E."/>
            <person name="Bandarian V."/>
        </authorList>
    </citation>
    <scope>FUNCTION AS CDG SYNTHASE</scope>
    <scope>CATALYTIC ACTIVITY</scope>
    <scope>COFACTOR</scope>
    <scope>S-ADENOSYL-L-METHIONINE-BINDING</scope>
    <scope>PATHWAY</scope>
    <source>
        <strain>168 / ATCC 23857D</strain>
    </source>
</reference>
<reference key="4">
    <citation type="journal article" date="2013" name="Biochemistry">
        <title>Spectroscopic, steady-state kinetic, and mechanistic characterization of the radical SAM enzyme QueE, which catalyzes a complex cyclization reaction in the biosynthesis of 7-deazapurines.</title>
        <authorList>
            <person name="McCarty R.M."/>
            <person name="Krebs C."/>
            <person name="Bandarian V."/>
        </authorList>
    </citation>
    <scope>FUNCTION</scope>
    <scope>CATALYTIC ACTIVITY</scope>
    <scope>SUBUNIT</scope>
    <scope>COFACTOR</scope>
    <scope>REACTION MECHANISM</scope>
</reference>
<name>QUEE_BACSU</name>
<gene>
    <name evidence="1 6" type="primary">queE</name>
    <name type="synonym">ykvL</name>
    <name type="ordered locus">BSU13740</name>
</gene>
<feature type="chain" id="PRO_0000392071" description="7-carboxy-7-deazaguanine synthase">
    <location>
        <begin position="1"/>
        <end position="243"/>
    </location>
</feature>
<feature type="domain" description="Radical SAM core" evidence="2">
    <location>
        <begin position="21"/>
        <end position="239"/>
    </location>
</feature>
<feature type="binding site" evidence="1">
    <location>
        <begin position="15"/>
        <end position="17"/>
    </location>
    <ligand>
        <name>substrate</name>
    </ligand>
</feature>
<feature type="binding site" evidence="1">
    <location>
        <position position="30"/>
    </location>
    <ligand>
        <name>substrate</name>
    </ligand>
</feature>
<feature type="binding site" evidence="1">
    <location>
        <position position="34"/>
    </location>
    <ligand>
        <name>[4Fe-4S] cluster</name>
        <dbReference type="ChEBI" id="CHEBI:49883"/>
        <note>4Fe-4S-S-AdoMet</note>
    </ligand>
</feature>
<feature type="binding site" evidence="1">
    <location>
        <position position="38"/>
    </location>
    <ligand>
        <name>[4Fe-4S] cluster</name>
        <dbReference type="ChEBI" id="CHEBI:49883"/>
        <note>4Fe-4S-S-AdoMet</note>
    </ligand>
</feature>
<feature type="binding site" evidence="1">
    <location>
        <position position="41"/>
    </location>
    <ligand>
        <name>[4Fe-4S] cluster</name>
        <dbReference type="ChEBI" id="CHEBI:49883"/>
        <note>4Fe-4S-S-AdoMet</note>
    </ligand>
</feature>
<feature type="binding site" evidence="1">
    <location>
        <position position="43"/>
    </location>
    <ligand>
        <name>Mg(2+)</name>
        <dbReference type="ChEBI" id="CHEBI:18420"/>
    </ligand>
</feature>
<feature type="binding site" evidence="1">
    <location>
        <position position="81"/>
    </location>
    <ligand>
        <name>substrate</name>
    </ligand>
</feature>
<feature type="binding site" evidence="1">
    <location>
        <position position="83"/>
    </location>
    <ligand>
        <name>S-adenosyl-L-methionine</name>
        <dbReference type="ChEBI" id="CHEBI:59789"/>
    </ligand>
</feature>
<feature type="binding site" evidence="1">
    <location>
        <begin position="127"/>
        <end position="129"/>
    </location>
    <ligand>
        <name>S-adenosyl-L-methionine</name>
        <dbReference type="ChEBI" id="CHEBI:59789"/>
    </ligand>
</feature>
<feature type="strand" evidence="9">
    <location>
        <begin position="5"/>
        <end position="15"/>
    </location>
</feature>
<feature type="helix" evidence="9">
    <location>
        <begin position="19"/>
        <end position="21"/>
    </location>
</feature>
<feature type="strand" evidence="9">
    <location>
        <begin position="24"/>
        <end position="31"/>
    </location>
</feature>
<feature type="helix" evidence="9">
    <location>
        <begin position="44"/>
        <end position="46"/>
    </location>
</feature>
<feature type="helix" evidence="9">
    <location>
        <begin position="52"/>
        <end position="54"/>
    </location>
</feature>
<feature type="strand" evidence="9">
    <location>
        <begin position="56"/>
        <end position="58"/>
    </location>
</feature>
<feature type="helix" evidence="9">
    <location>
        <begin position="60"/>
        <end position="71"/>
    </location>
</feature>
<feature type="strand" evidence="9">
    <location>
        <begin position="76"/>
        <end position="83"/>
    </location>
</feature>
<feature type="helix" evidence="9">
    <location>
        <begin position="85"/>
        <end position="87"/>
    </location>
</feature>
<feature type="helix" evidence="9">
    <location>
        <begin position="89"/>
        <end position="91"/>
    </location>
</feature>
<feature type="helix" evidence="9">
    <location>
        <begin position="92"/>
        <end position="99"/>
    </location>
</feature>
<feature type="turn" evidence="9">
    <location>
        <begin position="100"/>
        <end position="102"/>
    </location>
</feature>
<feature type="strand" evidence="9">
    <location>
        <begin position="104"/>
        <end position="109"/>
    </location>
</feature>
<feature type="strand" evidence="9">
    <location>
        <begin position="111"/>
        <end position="113"/>
    </location>
</feature>
<feature type="helix" evidence="9">
    <location>
        <begin position="116"/>
        <end position="120"/>
    </location>
</feature>
<feature type="strand" evidence="9">
    <location>
        <begin position="122"/>
        <end position="126"/>
    </location>
</feature>
<feature type="helix" evidence="9">
    <location>
        <begin position="131"/>
        <end position="133"/>
    </location>
</feature>
<feature type="helix" evidence="9">
    <location>
        <begin position="139"/>
        <end position="151"/>
    </location>
</feature>
<feature type="helix" evidence="9">
    <location>
        <begin position="155"/>
        <end position="157"/>
    </location>
</feature>
<feature type="strand" evidence="9">
    <location>
        <begin position="158"/>
        <end position="166"/>
    </location>
</feature>
<feature type="helix" evidence="9">
    <location>
        <begin position="167"/>
        <end position="179"/>
    </location>
</feature>
<feature type="strand" evidence="9">
    <location>
        <begin position="185"/>
        <end position="189"/>
    </location>
</feature>
<feature type="helix" evidence="9">
    <location>
        <begin position="199"/>
        <end position="218"/>
    </location>
</feature>
<feature type="strand" evidence="9">
    <location>
        <begin position="224"/>
        <end position="229"/>
    </location>
</feature>
<feature type="helix" evidence="9">
    <location>
        <begin position="232"/>
        <end position="237"/>
    </location>
</feature>
<evidence type="ECO:0000255" key="1">
    <source>
        <dbReference type="HAMAP-Rule" id="MF_00917"/>
    </source>
</evidence>
<evidence type="ECO:0000255" key="2">
    <source>
        <dbReference type="PROSITE-ProRule" id="PRU01266"/>
    </source>
</evidence>
<evidence type="ECO:0000269" key="3">
    <source>
    </source>
</evidence>
<evidence type="ECO:0000269" key="4">
    <source>
    </source>
</evidence>
<evidence type="ECO:0000269" key="5">
    <source>
    </source>
</evidence>
<evidence type="ECO:0000303" key="6">
    <source>
    </source>
</evidence>
<evidence type="ECO:0000303" key="7">
    <source>
    </source>
</evidence>
<evidence type="ECO:0000305" key="8">
    <source>
    </source>
</evidence>
<evidence type="ECO:0007829" key="9">
    <source>
        <dbReference type="PDB" id="5TH5"/>
    </source>
</evidence>
<organism>
    <name type="scientific">Bacillus subtilis (strain 168)</name>
    <dbReference type="NCBI Taxonomy" id="224308"/>
    <lineage>
        <taxon>Bacteria</taxon>
        <taxon>Bacillati</taxon>
        <taxon>Bacillota</taxon>
        <taxon>Bacilli</taxon>
        <taxon>Bacillales</taxon>
        <taxon>Bacillaceae</taxon>
        <taxon>Bacillus</taxon>
    </lineage>
</organism>
<keyword id="KW-0002">3D-structure</keyword>
<keyword id="KW-0004">4Fe-4S</keyword>
<keyword id="KW-0408">Iron</keyword>
<keyword id="KW-0411">Iron-sulfur</keyword>
<keyword id="KW-0456">Lyase</keyword>
<keyword id="KW-0460">Magnesium</keyword>
<keyword id="KW-0479">Metal-binding</keyword>
<keyword id="KW-0671">Queuosine biosynthesis</keyword>
<keyword id="KW-1185">Reference proteome</keyword>
<keyword id="KW-0949">S-adenosyl-L-methionine</keyword>
<dbReference type="EC" id="4.3.99.3" evidence="1 4 5"/>
<dbReference type="EMBL" id="AL009126">
    <property type="protein sequence ID" value="CAB13247.1"/>
    <property type="molecule type" value="Genomic_DNA"/>
</dbReference>
<dbReference type="PIR" id="C69868">
    <property type="entry name" value="C69868"/>
</dbReference>
<dbReference type="RefSeq" id="NP_389257.1">
    <property type="nucleotide sequence ID" value="NC_000964.3"/>
</dbReference>
<dbReference type="RefSeq" id="WP_003232460.1">
    <property type="nucleotide sequence ID" value="NZ_OZ025638.1"/>
</dbReference>
<dbReference type="PDB" id="5TGS">
    <property type="method" value="X-ray"/>
    <property type="resolution" value="2.55 A"/>
    <property type="chains" value="A/B=1-243"/>
</dbReference>
<dbReference type="PDB" id="5TH5">
    <property type="method" value="X-ray"/>
    <property type="resolution" value="2.41 A"/>
    <property type="chains" value="A/B/C/D=1-243"/>
</dbReference>
<dbReference type="PDBsum" id="5TGS"/>
<dbReference type="PDBsum" id="5TH5"/>
<dbReference type="SMR" id="O31677"/>
<dbReference type="FunCoup" id="O31677">
    <property type="interactions" value="106"/>
</dbReference>
<dbReference type="IntAct" id="O31677">
    <property type="interactions" value="1"/>
</dbReference>
<dbReference type="STRING" id="224308.BSU13740"/>
<dbReference type="jPOST" id="O31677"/>
<dbReference type="PaxDb" id="224308-BSU13740"/>
<dbReference type="DNASU" id="939290"/>
<dbReference type="EnsemblBacteria" id="CAB13247">
    <property type="protein sequence ID" value="CAB13247"/>
    <property type="gene ID" value="BSU_13740"/>
</dbReference>
<dbReference type="GeneID" id="939290"/>
<dbReference type="KEGG" id="bsu:BSU13740"/>
<dbReference type="PATRIC" id="fig|224308.179.peg.1491"/>
<dbReference type="eggNOG" id="COG0602">
    <property type="taxonomic scope" value="Bacteria"/>
</dbReference>
<dbReference type="InParanoid" id="O31677"/>
<dbReference type="OrthoDB" id="9792276at2"/>
<dbReference type="PhylomeDB" id="O31677"/>
<dbReference type="BioCyc" id="BSUB:BSU13740-MONOMER"/>
<dbReference type="BioCyc" id="MetaCyc:BSU13740-MONOMER"/>
<dbReference type="BRENDA" id="4.3.99.3">
    <property type="organism ID" value="658"/>
</dbReference>
<dbReference type="UniPathway" id="UPA00391"/>
<dbReference type="Proteomes" id="UP000001570">
    <property type="component" value="Chromosome"/>
</dbReference>
<dbReference type="GO" id="GO:0051539">
    <property type="term" value="F:4 iron, 4 sulfur cluster binding"/>
    <property type="evidence" value="ECO:0000314"/>
    <property type="project" value="UniProtKB"/>
</dbReference>
<dbReference type="GO" id="GO:0016840">
    <property type="term" value="F:carbon-nitrogen lyase activity"/>
    <property type="evidence" value="ECO:0000314"/>
    <property type="project" value="UniProtKB"/>
</dbReference>
<dbReference type="GO" id="GO:0000287">
    <property type="term" value="F:magnesium ion binding"/>
    <property type="evidence" value="ECO:0000314"/>
    <property type="project" value="UniProtKB"/>
</dbReference>
<dbReference type="GO" id="GO:0042803">
    <property type="term" value="F:protein homodimerization activity"/>
    <property type="evidence" value="ECO:0000314"/>
    <property type="project" value="UniProtKB"/>
</dbReference>
<dbReference type="GO" id="GO:1904047">
    <property type="term" value="F:S-adenosyl-L-methionine binding"/>
    <property type="evidence" value="ECO:0000314"/>
    <property type="project" value="UniProtKB"/>
</dbReference>
<dbReference type="GO" id="GO:0008616">
    <property type="term" value="P:queuosine biosynthetic process"/>
    <property type="evidence" value="ECO:0007669"/>
    <property type="project" value="UniProtKB-UniRule"/>
</dbReference>
<dbReference type="Gene3D" id="3.20.20.70">
    <property type="entry name" value="Aldolase class I"/>
    <property type="match status" value="1"/>
</dbReference>
<dbReference type="HAMAP" id="MF_00917">
    <property type="entry name" value="QueE"/>
    <property type="match status" value="1"/>
</dbReference>
<dbReference type="InterPro" id="IPR024924">
    <property type="entry name" value="7-CO-7-deazaguanine_synth-like"/>
</dbReference>
<dbReference type="InterPro" id="IPR013785">
    <property type="entry name" value="Aldolase_TIM"/>
</dbReference>
<dbReference type="InterPro" id="IPR017742">
    <property type="entry name" value="Deazaguanine_synth"/>
</dbReference>
<dbReference type="InterPro" id="IPR007197">
    <property type="entry name" value="rSAM"/>
</dbReference>
<dbReference type="NCBIfam" id="TIGR03365">
    <property type="entry name" value="Bsubt_queE"/>
    <property type="match status" value="1"/>
</dbReference>
<dbReference type="PANTHER" id="PTHR42836">
    <property type="entry name" value="7-CARBOXY-7-DEAZAGUANINE SYNTHASE"/>
    <property type="match status" value="1"/>
</dbReference>
<dbReference type="PANTHER" id="PTHR42836:SF1">
    <property type="entry name" value="7-CARBOXY-7-DEAZAGUANINE SYNTHASE"/>
    <property type="match status" value="1"/>
</dbReference>
<dbReference type="Pfam" id="PF13353">
    <property type="entry name" value="Fer4_12"/>
    <property type="match status" value="1"/>
</dbReference>
<dbReference type="Pfam" id="PF04055">
    <property type="entry name" value="Radical_SAM"/>
    <property type="match status" value="1"/>
</dbReference>
<dbReference type="PIRSF" id="PIRSF000370">
    <property type="entry name" value="QueE"/>
    <property type="match status" value="1"/>
</dbReference>
<dbReference type="SFLD" id="SFLDF00300">
    <property type="entry name" value="7-carboxy-7-deazaguanine_synth"/>
    <property type="match status" value="1"/>
</dbReference>
<dbReference type="SFLD" id="SFLDS00029">
    <property type="entry name" value="Radical_SAM"/>
    <property type="match status" value="1"/>
</dbReference>
<dbReference type="SUPFAM" id="SSF102114">
    <property type="entry name" value="Radical SAM enzymes"/>
    <property type="match status" value="1"/>
</dbReference>
<dbReference type="PROSITE" id="PS51918">
    <property type="entry name" value="RADICAL_SAM"/>
    <property type="match status" value="1"/>
</dbReference>
<comment type="function">
    <text evidence="1 3 4 5">Catalyzes the complex heterocyclic radical-mediated conversion of 6-carboxy-5,6,7,8-tetrahydropterin (CPH4) to 7-carboxy-7-deazaguanine (CDG), a step common to the biosynthetic pathways of all 7-deazapurine-containing compounds.</text>
</comment>
<comment type="catalytic activity">
    <reaction evidence="1 4 5">
        <text>6-carboxy-5,6,7,8-tetrahydropterin + H(+) = 7-carboxy-7-deazaguanine + NH4(+)</text>
        <dbReference type="Rhea" id="RHEA:27974"/>
        <dbReference type="ChEBI" id="CHEBI:15378"/>
        <dbReference type="ChEBI" id="CHEBI:28938"/>
        <dbReference type="ChEBI" id="CHEBI:61032"/>
        <dbReference type="ChEBI" id="CHEBI:61036"/>
        <dbReference type="EC" id="4.3.99.3"/>
    </reaction>
</comment>
<comment type="cofactor">
    <cofactor evidence="5 8">
        <name>[4Fe-4S] cluster</name>
        <dbReference type="ChEBI" id="CHEBI:49883"/>
    </cofactor>
    <text evidence="5 8">Binds 1 [4Fe-4S] cluster. The cluster is coordinated with 3 cysteines and an exchangeable S-adenosyl-L-methionine.</text>
</comment>
<comment type="cofactor">
    <cofactor evidence="1 4 5">
        <name>S-adenosyl-L-methionine</name>
        <dbReference type="ChEBI" id="CHEBI:59789"/>
    </cofactor>
    <text evidence="1 4 5">Binds 1 S-adenosyl-L-methionine per subunit.</text>
</comment>
<comment type="cofactor">
    <cofactor evidence="1 5">
        <name>Mg(2+)</name>
        <dbReference type="ChEBI" id="CHEBI:18420"/>
    </cofactor>
</comment>
<comment type="biophysicochemical properties">
    <kinetics>
        <KM evidence="5">20 uM for 6-carboxy-5,6,7,8-tetrahydropterin</KM>
        <text evidence="5">kcat is 5.4 min(-1).</text>
    </kinetics>
</comment>
<comment type="pathway">
    <text evidence="1 4">Purine metabolism; 7-cyano-7-deazaguanine biosynthesis.</text>
</comment>
<comment type="subunit">
    <text evidence="1 5">Homodimer.</text>
</comment>
<comment type="similarity">
    <text evidence="1">Belongs to the radical SAM superfamily. 7-carboxy-7-deazaguanine synthase family.</text>
</comment>
<proteinExistence type="evidence at protein level"/>
<accession>O31677</accession>
<protein>
    <recommendedName>
        <fullName evidence="1 7">7-carboxy-7-deazaguanine synthase</fullName>
        <shortName evidence="1 7">CDG synthase</shortName>
        <ecNumber evidence="1 4 5">4.3.99.3</ecNumber>
    </recommendedName>
    <alternativeName>
        <fullName evidence="1">Queuosine biosynthesis protein QueE</fullName>
    </alternativeName>
</protein>